<gene>
    <name type="ORF">GJ21018</name>
</gene>
<protein>
    <recommendedName>
        <fullName>Ubiquitin-fold modifier 1</fullName>
    </recommendedName>
</protein>
<dbReference type="EMBL" id="CH940648">
    <property type="protein sequence ID" value="EDW60174.1"/>
    <property type="molecule type" value="Genomic_DNA"/>
</dbReference>
<dbReference type="SMR" id="B4LP65"/>
<dbReference type="FunCoup" id="B4LP65">
    <property type="interactions" value="1028"/>
</dbReference>
<dbReference type="STRING" id="7244.B4LP65"/>
<dbReference type="EnsemblMetazoa" id="FBtr0236943">
    <property type="protein sequence ID" value="FBpp0235435"/>
    <property type="gene ID" value="FBgn0208153"/>
</dbReference>
<dbReference type="EnsemblMetazoa" id="XM_002048945.3">
    <property type="protein sequence ID" value="XP_002048981.1"/>
    <property type="gene ID" value="LOC6624823"/>
</dbReference>
<dbReference type="GeneID" id="6624823"/>
<dbReference type="KEGG" id="dvi:6624823"/>
<dbReference type="CTD" id="51569"/>
<dbReference type="eggNOG" id="KOG3483">
    <property type="taxonomic scope" value="Eukaryota"/>
</dbReference>
<dbReference type="HOGENOM" id="CLU_175114_0_0_1"/>
<dbReference type="InParanoid" id="B4LP65"/>
<dbReference type="OMA" id="MEHAVGK"/>
<dbReference type="OrthoDB" id="284357at2759"/>
<dbReference type="PhylomeDB" id="B4LP65"/>
<dbReference type="Proteomes" id="UP000008792">
    <property type="component" value="Unassembled WGS sequence"/>
</dbReference>
<dbReference type="GO" id="GO:0005829">
    <property type="term" value="C:cytosol"/>
    <property type="evidence" value="ECO:0007669"/>
    <property type="project" value="EnsemblMetazoa"/>
</dbReference>
<dbReference type="GO" id="GO:0005634">
    <property type="term" value="C:nucleus"/>
    <property type="evidence" value="ECO:0007669"/>
    <property type="project" value="TreeGrafter"/>
</dbReference>
<dbReference type="GO" id="GO:0031386">
    <property type="term" value="F:protein tag activity"/>
    <property type="evidence" value="ECO:0007669"/>
    <property type="project" value="EnsemblMetazoa"/>
</dbReference>
<dbReference type="GO" id="GO:0050905">
    <property type="term" value="P:neuromuscular process"/>
    <property type="evidence" value="ECO:0007669"/>
    <property type="project" value="EnsemblMetazoa"/>
</dbReference>
<dbReference type="GO" id="GO:1990592">
    <property type="term" value="P:protein K69-linked ufmylation"/>
    <property type="evidence" value="ECO:0007669"/>
    <property type="project" value="TreeGrafter"/>
</dbReference>
<dbReference type="CDD" id="cd01766">
    <property type="entry name" value="Ubl_UFM1"/>
    <property type="match status" value="1"/>
</dbReference>
<dbReference type="FunFam" id="3.10.20.90:FF:000044">
    <property type="entry name" value="Ubiquitin-fold modifier 1"/>
    <property type="match status" value="1"/>
</dbReference>
<dbReference type="Gene3D" id="3.10.20.90">
    <property type="entry name" value="Phosphatidylinositol 3-kinase Catalytic Subunit, Chain A, domain 1"/>
    <property type="match status" value="1"/>
</dbReference>
<dbReference type="InterPro" id="IPR029071">
    <property type="entry name" value="Ubiquitin-like_domsf"/>
</dbReference>
<dbReference type="InterPro" id="IPR005375">
    <property type="entry name" value="UFM1"/>
</dbReference>
<dbReference type="PANTHER" id="PTHR15825">
    <property type="entry name" value="UBIQUITIN-FOLD MODIFIER 1"/>
    <property type="match status" value="1"/>
</dbReference>
<dbReference type="PANTHER" id="PTHR15825:SF0">
    <property type="entry name" value="UBIQUITIN-FOLD MODIFIER 1"/>
    <property type="match status" value="1"/>
</dbReference>
<dbReference type="Pfam" id="PF03671">
    <property type="entry name" value="Ufm1"/>
    <property type="match status" value="1"/>
</dbReference>
<dbReference type="PIRSF" id="PIRSF038027">
    <property type="entry name" value="Ubiquitin-like_Ufm1"/>
    <property type="match status" value="1"/>
</dbReference>
<dbReference type="SUPFAM" id="SSF54236">
    <property type="entry name" value="Ubiquitin-like"/>
    <property type="match status" value="1"/>
</dbReference>
<proteinExistence type="inferred from homology"/>
<accession>B4LP65</accession>
<sequence>MSKVTFKITLTSDPKLPFKVLSVPEATPFTAVLKFASEEFKVPAETSAIITDDGIGISPQQTAGNVFLKHGSELRLIPRDRVGH</sequence>
<reference key="1">
    <citation type="journal article" date="2007" name="Nature">
        <title>Evolution of genes and genomes on the Drosophila phylogeny.</title>
        <authorList>
            <consortium name="Drosophila 12 genomes consortium"/>
        </authorList>
    </citation>
    <scope>NUCLEOTIDE SEQUENCE [LARGE SCALE GENOMIC DNA]</scope>
    <source>
        <strain>Tucson 15010-1051.87</strain>
    </source>
</reference>
<evidence type="ECO:0000250" key="1"/>
<evidence type="ECO:0000255" key="2"/>
<evidence type="ECO:0000305" key="3"/>
<keyword id="KW-1017">Isopeptide bond</keyword>
<keyword id="KW-1185">Reference proteome</keyword>
<keyword id="KW-0833">Ubl conjugation pathway</keyword>
<feature type="chain" id="PRO_0000392011" description="Ubiquitin-fold modifier 1">
    <location>
        <begin position="1"/>
        <end position="83"/>
    </location>
</feature>
<feature type="propeptide" id="PRO_0000392012" description="Removed in mature form" evidence="1">
    <location>
        <position position="84"/>
    </location>
</feature>
<feature type="cross-link" description="Glycyl lysine isopeptide (Gly-Lys) (interchain with K-? in acceptor proteins)" evidence="2">
    <location>
        <position position="83"/>
    </location>
</feature>
<name>UFM1_DROVI</name>
<organism>
    <name type="scientific">Drosophila virilis</name>
    <name type="common">Fruit fly</name>
    <dbReference type="NCBI Taxonomy" id="7244"/>
    <lineage>
        <taxon>Eukaryota</taxon>
        <taxon>Metazoa</taxon>
        <taxon>Ecdysozoa</taxon>
        <taxon>Arthropoda</taxon>
        <taxon>Hexapoda</taxon>
        <taxon>Insecta</taxon>
        <taxon>Pterygota</taxon>
        <taxon>Neoptera</taxon>
        <taxon>Endopterygota</taxon>
        <taxon>Diptera</taxon>
        <taxon>Brachycera</taxon>
        <taxon>Muscomorpha</taxon>
        <taxon>Ephydroidea</taxon>
        <taxon>Drosophilidae</taxon>
        <taxon>Drosophila</taxon>
    </lineage>
</organism>
<comment type="function">
    <text evidence="1">Ubiquitin-like modifier protein which binds to a number of as yet unidentified target proteins.</text>
</comment>
<comment type="similarity">
    <text evidence="3">Belongs to the UFM1 family.</text>
</comment>